<organism>
    <name type="scientific">Methanocorpusculum labreanum (strain ATCC 43576 / DSM 4855 / Z)</name>
    <dbReference type="NCBI Taxonomy" id="410358"/>
    <lineage>
        <taxon>Archaea</taxon>
        <taxon>Methanobacteriati</taxon>
        <taxon>Methanobacteriota</taxon>
        <taxon>Stenosarchaea group</taxon>
        <taxon>Methanomicrobia</taxon>
        <taxon>Methanomicrobiales</taxon>
        <taxon>Methanocorpusculaceae</taxon>
        <taxon>Methanocorpusculum</taxon>
    </lineage>
</organism>
<dbReference type="EC" id="2.7.7.6" evidence="1"/>
<dbReference type="EMBL" id="CP000559">
    <property type="protein sequence ID" value="ABN07409.1"/>
    <property type="molecule type" value="Genomic_DNA"/>
</dbReference>
<dbReference type="RefSeq" id="WP_011833612.1">
    <property type="nucleotide sequence ID" value="NC_008942.1"/>
</dbReference>
<dbReference type="SMR" id="A2SSV3"/>
<dbReference type="STRING" id="410358.Mlab_1240"/>
<dbReference type="GeneID" id="32154289"/>
<dbReference type="KEGG" id="mla:Mlab_1240"/>
<dbReference type="eggNOG" id="arCOG04244">
    <property type="taxonomic scope" value="Archaea"/>
</dbReference>
<dbReference type="HOGENOM" id="CLU_143122_1_1_2"/>
<dbReference type="OrthoDB" id="371754at2157"/>
<dbReference type="Proteomes" id="UP000000365">
    <property type="component" value="Chromosome"/>
</dbReference>
<dbReference type="GO" id="GO:0005737">
    <property type="term" value="C:cytoplasm"/>
    <property type="evidence" value="ECO:0007669"/>
    <property type="project" value="UniProtKB-SubCell"/>
</dbReference>
<dbReference type="GO" id="GO:0000428">
    <property type="term" value="C:DNA-directed RNA polymerase complex"/>
    <property type="evidence" value="ECO:0007669"/>
    <property type="project" value="UniProtKB-KW"/>
</dbReference>
<dbReference type="GO" id="GO:0003677">
    <property type="term" value="F:DNA binding"/>
    <property type="evidence" value="ECO:0007669"/>
    <property type="project" value="InterPro"/>
</dbReference>
<dbReference type="GO" id="GO:0003899">
    <property type="term" value="F:DNA-directed RNA polymerase activity"/>
    <property type="evidence" value="ECO:0007669"/>
    <property type="project" value="UniProtKB-UniRule"/>
</dbReference>
<dbReference type="GO" id="GO:0008270">
    <property type="term" value="F:zinc ion binding"/>
    <property type="evidence" value="ECO:0007669"/>
    <property type="project" value="UniProtKB-UniRule"/>
</dbReference>
<dbReference type="GO" id="GO:0006351">
    <property type="term" value="P:DNA-templated transcription"/>
    <property type="evidence" value="ECO:0007669"/>
    <property type="project" value="UniProtKB-UniRule"/>
</dbReference>
<dbReference type="Gene3D" id="1.10.10.60">
    <property type="entry name" value="Homeodomain-like"/>
    <property type="match status" value="1"/>
</dbReference>
<dbReference type="HAMAP" id="MF_00250">
    <property type="entry name" value="RNApol_arch_Rpo10"/>
    <property type="match status" value="1"/>
</dbReference>
<dbReference type="InterPro" id="IPR023580">
    <property type="entry name" value="RNA_pol_su_RPB10"/>
</dbReference>
<dbReference type="InterPro" id="IPR020789">
    <property type="entry name" value="RNA_pol_suN_Zn-BS"/>
</dbReference>
<dbReference type="InterPro" id="IPR000268">
    <property type="entry name" value="RPABC5/Rpb10"/>
</dbReference>
<dbReference type="NCBIfam" id="NF003089">
    <property type="entry name" value="PRK04016.1"/>
    <property type="match status" value="1"/>
</dbReference>
<dbReference type="PANTHER" id="PTHR23431:SF3">
    <property type="entry name" value="DNA-DIRECTED RNA POLYMERASES I, II, AND III SUBUNIT RPABC5"/>
    <property type="match status" value="1"/>
</dbReference>
<dbReference type="PANTHER" id="PTHR23431">
    <property type="entry name" value="DNA-DIRECTED RNA POLYMERASES I, II, AND III SUBUNIT RPABC5 FAMILY MEMBER"/>
    <property type="match status" value="1"/>
</dbReference>
<dbReference type="Pfam" id="PF01194">
    <property type="entry name" value="RNA_pol_N"/>
    <property type="match status" value="1"/>
</dbReference>
<dbReference type="PIRSF" id="PIRSF005653">
    <property type="entry name" value="RNA_pol_N/8_sub"/>
    <property type="match status" value="1"/>
</dbReference>
<dbReference type="SUPFAM" id="SSF46924">
    <property type="entry name" value="RNA polymerase subunit RPB10"/>
    <property type="match status" value="1"/>
</dbReference>
<dbReference type="PROSITE" id="PS01112">
    <property type="entry name" value="RNA_POL_N_8KD"/>
    <property type="match status" value="1"/>
</dbReference>
<sequence>MIPVRCFTCGKVISTVWEEYQQRKAAGEDPKEILDSLGLDRYCCRRMLLSHKETVDELYPYT</sequence>
<accession>A2SSV3</accession>
<name>RPO10_METLZ</name>
<evidence type="ECO:0000255" key="1">
    <source>
        <dbReference type="HAMAP-Rule" id="MF_00250"/>
    </source>
</evidence>
<comment type="function">
    <text evidence="1">DNA-dependent RNA polymerase (RNAP) catalyzes the transcription of DNA into RNA using the four ribonucleoside triphosphates as substrates.</text>
</comment>
<comment type="catalytic activity">
    <reaction evidence="1">
        <text>RNA(n) + a ribonucleoside 5'-triphosphate = RNA(n+1) + diphosphate</text>
        <dbReference type="Rhea" id="RHEA:21248"/>
        <dbReference type="Rhea" id="RHEA-COMP:14527"/>
        <dbReference type="Rhea" id="RHEA-COMP:17342"/>
        <dbReference type="ChEBI" id="CHEBI:33019"/>
        <dbReference type="ChEBI" id="CHEBI:61557"/>
        <dbReference type="ChEBI" id="CHEBI:140395"/>
        <dbReference type="EC" id="2.7.7.6"/>
    </reaction>
</comment>
<comment type="cofactor">
    <cofactor evidence="1">
        <name>Zn(2+)</name>
        <dbReference type="ChEBI" id="CHEBI:29105"/>
    </cofactor>
    <text evidence="1">Binds 1 zinc ion.</text>
</comment>
<comment type="subunit">
    <text evidence="1">Part of the RNA polymerase complex.</text>
</comment>
<comment type="subcellular location">
    <subcellularLocation>
        <location evidence="1">Cytoplasm</location>
    </subcellularLocation>
</comment>
<comment type="similarity">
    <text evidence="1">Belongs to the archaeal Rpo10/eukaryotic RPB10 RNA polymerase subunit family.</text>
</comment>
<proteinExistence type="inferred from homology"/>
<protein>
    <recommendedName>
        <fullName evidence="1">DNA-directed RNA polymerase subunit Rpo10</fullName>
        <ecNumber evidence="1">2.7.7.6</ecNumber>
    </recommendedName>
    <alternativeName>
        <fullName evidence="1">DNA-directed RNA polymerase subunit N</fullName>
    </alternativeName>
</protein>
<keyword id="KW-0963">Cytoplasm</keyword>
<keyword id="KW-0240">DNA-directed RNA polymerase</keyword>
<keyword id="KW-0479">Metal-binding</keyword>
<keyword id="KW-0548">Nucleotidyltransferase</keyword>
<keyword id="KW-1185">Reference proteome</keyword>
<keyword id="KW-0804">Transcription</keyword>
<keyword id="KW-0808">Transferase</keyword>
<keyword id="KW-0862">Zinc</keyword>
<feature type="chain" id="PRO_0000304192" description="DNA-directed RNA polymerase subunit Rpo10">
    <location>
        <begin position="1"/>
        <end position="62"/>
    </location>
</feature>
<feature type="binding site" evidence="1">
    <location>
        <position position="6"/>
    </location>
    <ligand>
        <name>Zn(2+)</name>
        <dbReference type="ChEBI" id="CHEBI:29105"/>
    </ligand>
</feature>
<feature type="binding site" evidence="1">
    <location>
        <position position="9"/>
    </location>
    <ligand>
        <name>Zn(2+)</name>
        <dbReference type="ChEBI" id="CHEBI:29105"/>
    </ligand>
</feature>
<feature type="binding site" evidence="1">
    <location>
        <position position="43"/>
    </location>
    <ligand>
        <name>Zn(2+)</name>
        <dbReference type="ChEBI" id="CHEBI:29105"/>
    </ligand>
</feature>
<feature type="binding site" evidence="1">
    <location>
        <position position="44"/>
    </location>
    <ligand>
        <name>Zn(2+)</name>
        <dbReference type="ChEBI" id="CHEBI:29105"/>
    </ligand>
</feature>
<reference key="1">
    <citation type="journal article" date="2009" name="Stand. Genomic Sci.">
        <title>Complete genome sequence of Methanocorpusculum labreanum type strain Z.</title>
        <authorList>
            <person name="Anderson I.J."/>
            <person name="Sieprawska-Lupa M."/>
            <person name="Goltsman E."/>
            <person name="Lapidus A."/>
            <person name="Copeland A."/>
            <person name="Glavina Del Rio T."/>
            <person name="Tice H."/>
            <person name="Dalin E."/>
            <person name="Barry K."/>
            <person name="Pitluck S."/>
            <person name="Hauser L."/>
            <person name="Land M."/>
            <person name="Lucas S."/>
            <person name="Richardson P."/>
            <person name="Whitman W.B."/>
            <person name="Kyrpides N.C."/>
        </authorList>
    </citation>
    <scope>NUCLEOTIDE SEQUENCE [LARGE SCALE GENOMIC DNA]</scope>
    <source>
        <strain>ATCC 43576 / DSM 4855 / Z</strain>
    </source>
</reference>
<gene>
    <name evidence="1" type="primary">rpo10</name>
    <name evidence="1" type="synonym">rpoN</name>
    <name type="ordered locus">Mlab_1240</name>
</gene>